<name>E4PD_VIBC3</name>
<accession>A5F9G1</accession>
<accession>C3LX29</accession>
<accession>P96153</accession>
<accession>Q9KUN9</accession>
<keyword id="KW-0963">Cytoplasm</keyword>
<keyword id="KW-0520">NAD</keyword>
<keyword id="KW-0560">Oxidoreductase</keyword>
<keyword id="KW-0664">Pyridoxine biosynthesis</keyword>
<comment type="function">
    <text evidence="1">Catalyzes the NAD-dependent conversion of D-erythrose 4-phosphate to 4-phosphoerythronate.</text>
</comment>
<comment type="catalytic activity">
    <reaction evidence="1 2">
        <text>D-erythrose 4-phosphate + NAD(+) + H2O = 4-phospho-D-erythronate + NADH + 2 H(+)</text>
        <dbReference type="Rhea" id="RHEA:12056"/>
        <dbReference type="ChEBI" id="CHEBI:15377"/>
        <dbReference type="ChEBI" id="CHEBI:15378"/>
        <dbReference type="ChEBI" id="CHEBI:16897"/>
        <dbReference type="ChEBI" id="CHEBI:57540"/>
        <dbReference type="ChEBI" id="CHEBI:57945"/>
        <dbReference type="ChEBI" id="CHEBI:58766"/>
        <dbReference type="EC" id="1.2.1.72"/>
    </reaction>
</comment>
<comment type="pathway">
    <text evidence="1">Cofactor biosynthesis; pyridoxine 5'-phosphate biosynthesis; pyridoxine 5'-phosphate from D-erythrose 4-phosphate: step 1/5.</text>
</comment>
<comment type="subunit">
    <text evidence="1">Homotetramer.</text>
</comment>
<comment type="subcellular location">
    <subcellularLocation>
        <location evidence="1">Cytoplasm</location>
    </subcellularLocation>
</comment>
<comment type="similarity">
    <text evidence="1">Belongs to the glyceraldehyde-3-phosphate dehydrogenase family. Epd subfamily.</text>
</comment>
<comment type="sequence caution" evidence="3">
    <conflict type="erroneous initiation">
        <sequence resource="EMBL-CDS" id="ABQ20538"/>
    </conflict>
</comment>
<comment type="sequence caution" evidence="3">
    <conflict type="erroneous initiation">
        <sequence resource="EMBL-CDS" id="ACP08539"/>
    </conflict>
</comment>
<evidence type="ECO:0000255" key="1">
    <source>
        <dbReference type="HAMAP-Rule" id="MF_01640"/>
    </source>
</evidence>
<evidence type="ECO:0000269" key="2">
    <source>
    </source>
</evidence>
<evidence type="ECO:0000305" key="3"/>
<gene>
    <name evidence="1" type="primary">epd</name>
    <name type="ordered locus">VC0395_A0029</name>
    <name type="ordered locus">VC395_0520</name>
</gene>
<feature type="chain" id="PRO_0000321845" description="D-erythrose-4-phosphate dehydrogenase">
    <location>
        <begin position="1"/>
        <end position="341"/>
    </location>
</feature>
<feature type="active site" description="Nucleophile" evidence="1">
    <location>
        <position position="159"/>
    </location>
</feature>
<feature type="binding site" evidence="1">
    <location>
        <begin position="11"/>
        <end position="12"/>
    </location>
    <ligand>
        <name>NAD(+)</name>
        <dbReference type="ChEBI" id="CHEBI:57540"/>
    </ligand>
</feature>
<feature type="binding site" evidence="1">
    <location>
        <begin position="158"/>
        <end position="160"/>
    </location>
    <ligand>
        <name>substrate</name>
    </ligand>
</feature>
<feature type="binding site" evidence="1">
    <location>
        <position position="204"/>
    </location>
    <ligand>
        <name>substrate</name>
    </ligand>
</feature>
<feature type="binding site" evidence="1">
    <location>
        <begin position="217"/>
        <end position="218"/>
    </location>
    <ligand>
        <name>substrate</name>
    </ligand>
</feature>
<feature type="binding site" evidence="1">
    <location>
        <position position="240"/>
    </location>
    <ligand>
        <name>substrate</name>
    </ligand>
</feature>
<feature type="binding site" evidence="1">
    <location>
        <position position="322"/>
    </location>
    <ligand>
        <name>NAD(+)</name>
        <dbReference type="ChEBI" id="CHEBI:57540"/>
    </ligand>
</feature>
<feature type="site" description="Activates thiol group during catalysis" evidence="1">
    <location>
        <position position="186"/>
    </location>
</feature>
<sequence length="341" mass="37773">MLRVAINGFGRIGRNVLRAVYESGKRDRIQVVAVNELAKPDAMAHLLQYDTSHGRFGKKISHDQQHIYVHHQNGEYDSIRILHLSEIPLLPWRDLGVDLVLDCTGVYGCQEDGQQHIDAGAKLVLFSHPGASDLDNTIIYGVNHETLTAEHKIVSNGSCTTNCIVPIIKVLDDAFGIDSGTITTIHSSMNDQQVIDAYHNDLRRTRAASQSIIPVDTKLHKGIERIFPKFSNKFEAISVRVPTVNVTAMDLSVTIKSNVKVNDVNQTIVNASQCTLRGIVDYTEAPLVSIDFNHDPHSAIVDGTQTRVSNGQLVKMLVWCDNEWGFANRMLDTALAMQATQ</sequence>
<reference key="1">
    <citation type="journal article" date="1997" name="J. Bacteriol.">
        <title>Identification, sequencing, and enzymatic activity of the erythrose-4-phosphate dehydrogenase gene of Vibrio cholerae.</title>
        <authorList>
            <person name="Carroll P.A."/>
            <person name="Zhao G."/>
            <person name="Boyko S.A."/>
            <person name="Winkler M.E."/>
            <person name="Calderwood S.B."/>
        </authorList>
    </citation>
    <scope>NUCLEOTIDE SEQUENCE [GENOMIC DNA]</scope>
    <scope>CATALYTIC ACTIVITY</scope>
</reference>
<reference key="2">
    <citation type="submission" date="2007-03" db="EMBL/GenBank/DDBJ databases">
        <authorList>
            <person name="Heidelberg J."/>
        </authorList>
    </citation>
    <scope>NUCLEOTIDE SEQUENCE [LARGE SCALE GENOMIC DNA]</scope>
    <source>
        <strain>ATCC 39541 / Classical Ogawa 395 / O395</strain>
    </source>
</reference>
<reference key="3">
    <citation type="journal article" date="2008" name="PLoS ONE">
        <title>A recalibrated molecular clock and independent origins for the cholera pandemic clones.</title>
        <authorList>
            <person name="Feng L."/>
            <person name="Reeves P.R."/>
            <person name="Lan R."/>
            <person name="Ren Y."/>
            <person name="Gao C."/>
            <person name="Zhou Z."/>
            <person name="Ren Y."/>
            <person name="Cheng J."/>
            <person name="Wang W."/>
            <person name="Wang J."/>
            <person name="Qian W."/>
            <person name="Li D."/>
            <person name="Wang L."/>
        </authorList>
    </citation>
    <scope>NUCLEOTIDE SEQUENCE [LARGE SCALE GENOMIC DNA]</scope>
    <source>
        <strain>ATCC 39541 / Classical Ogawa 395 / O395</strain>
    </source>
</reference>
<protein>
    <recommendedName>
        <fullName evidence="1">D-erythrose-4-phosphate dehydrogenase</fullName>
        <shortName evidence="1">E4PDH</shortName>
        <ecNumber evidence="1">1.2.1.72</ecNumber>
    </recommendedName>
</protein>
<organism>
    <name type="scientific">Vibrio cholerae serotype O1 (strain ATCC 39541 / Classical Ogawa 395 / O395)</name>
    <dbReference type="NCBI Taxonomy" id="345073"/>
    <lineage>
        <taxon>Bacteria</taxon>
        <taxon>Pseudomonadati</taxon>
        <taxon>Pseudomonadota</taxon>
        <taxon>Gammaproteobacteria</taxon>
        <taxon>Vibrionales</taxon>
        <taxon>Vibrionaceae</taxon>
        <taxon>Vibrio</taxon>
    </lineage>
</organism>
<dbReference type="EC" id="1.2.1.72" evidence="1"/>
<dbReference type="EMBL" id="U72152">
    <property type="protein sequence ID" value="AAC44767.1"/>
    <property type="molecule type" value="Genomic_DNA"/>
</dbReference>
<dbReference type="EMBL" id="CP000627">
    <property type="protein sequence ID" value="ABQ20538.1"/>
    <property type="status" value="ALT_INIT"/>
    <property type="molecule type" value="Genomic_DNA"/>
</dbReference>
<dbReference type="EMBL" id="CP001235">
    <property type="protein sequence ID" value="ACP08539.1"/>
    <property type="status" value="ALT_INIT"/>
    <property type="molecule type" value="Genomic_DNA"/>
</dbReference>
<dbReference type="RefSeq" id="WP_000946626.1">
    <property type="nucleotide sequence ID" value="NZ_JAACZH010000029.1"/>
</dbReference>
<dbReference type="SMR" id="A5F9G1"/>
<dbReference type="GeneID" id="69720756"/>
<dbReference type="KEGG" id="vco:VC0395_A0029"/>
<dbReference type="KEGG" id="vcr:VC395_0520"/>
<dbReference type="PATRIC" id="fig|345073.21.peg.508"/>
<dbReference type="eggNOG" id="COG0057">
    <property type="taxonomic scope" value="Bacteria"/>
</dbReference>
<dbReference type="HOGENOM" id="CLU_030140_0_2_6"/>
<dbReference type="OrthoDB" id="9803304at2"/>
<dbReference type="UniPathway" id="UPA00244">
    <property type="reaction ID" value="UER00309"/>
</dbReference>
<dbReference type="Proteomes" id="UP000000249">
    <property type="component" value="Chromosome 2"/>
</dbReference>
<dbReference type="GO" id="GO:0005737">
    <property type="term" value="C:cytoplasm"/>
    <property type="evidence" value="ECO:0007669"/>
    <property type="project" value="UniProtKB-SubCell"/>
</dbReference>
<dbReference type="GO" id="GO:0048001">
    <property type="term" value="F:erythrose-4-phosphate dehydrogenase activity"/>
    <property type="evidence" value="ECO:0000314"/>
    <property type="project" value="CACAO"/>
</dbReference>
<dbReference type="GO" id="GO:0051287">
    <property type="term" value="F:NAD binding"/>
    <property type="evidence" value="ECO:0007669"/>
    <property type="project" value="InterPro"/>
</dbReference>
<dbReference type="GO" id="GO:0042823">
    <property type="term" value="P:pyridoxal phosphate biosynthetic process"/>
    <property type="evidence" value="ECO:0007669"/>
    <property type="project" value="UniProtKB-UniRule"/>
</dbReference>
<dbReference type="GO" id="GO:0008615">
    <property type="term" value="P:pyridoxine biosynthetic process"/>
    <property type="evidence" value="ECO:0007669"/>
    <property type="project" value="UniProtKB-UniRule"/>
</dbReference>
<dbReference type="CDD" id="cd23937">
    <property type="entry name" value="GAPDH_C_E4PDH"/>
    <property type="match status" value="1"/>
</dbReference>
<dbReference type="FunFam" id="3.30.360.10:FF:000007">
    <property type="entry name" value="D-erythrose-4-phosphate dehydrogenase"/>
    <property type="match status" value="1"/>
</dbReference>
<dbReference type="FunFam" id="3.40.50.720:FF:000001">
    <property type="entry name" value="Glyceraldehyde-3-phosphate dehydrogenase"/>
    <property type="match status" value="1"/>
</dbReference>
<dbReference type="Gene3D" id="3.30.360.10">
    <property type="entry name" value="Dihydrodipicolinate Reductase, domain 2"/>
    <property type="match status" value="1"/>
</dbReference>
<dbReference type="Gene3D" id="3.40.50.720">
    <property type="entry name" value="NAD(P)-binding Rossmann-like Domain"/>
    <property type="match status" value="1"/>
</dbReference>
<dbReference type="HAMAP" id="MF_01640">
    <property type="entry name" value="E4P_dehydrog"/>
    <property type="match status" value="1"/>
</dbReference>
<dbReference type="InterPro" id="IPR006422">
    <property type="entry name" value="E4P_DH_bac"/>
</dbReference>
<dbReference type="InterPro" id="IPR020831">
    <property type="entry name" value="GlycerAld/Erythrose_P_DH"/>
</dbReference>
<dbReference type="InterPro" id="IPR020829">
    <property type="entry name" value="GlycerAld_3-P_DH_cat"/>
</dbReference>
<dbReference type="InterPro" id="IPR020828">
    <property type="entry name" value="GlycerAld_3-P_DH_NAD(P)-bd"/>
</dbReference>
<dbReference type="InterPro" id="IPR036291">
    <property type="entry name" value="NAD(P)-bd_dom_sf"/>
</dbReference>
<dbReference type="NCBIfam" id="TIGR01532">
    <property type="entry name" value="E4PD_g-proteo"/>
    <property type="match status" value="1"/>
</dbReference>
<dbReference type="NCBIfam" id="NF010058">
    <property type="entry name" value="PRK13535.1"/>
    <property type="match status" value="1"/>
</dbReference>
<dbReference type="PANTHER" id="PTHR43148">
    <property type="entry name" value="GLYCERALDEHYDE-3-PHOSPHATE DEHYDROGENASE 2"/>
    <property type="match status" value="1"/>
</dbReference>
<dbReference type="Pfam" id="PF02800">
    <property type="entry name" value="Gp_dh_C"/>
    <property type="match status" value="1"/>
</dbReference>
<dbReference type="Pfam" id="PF00044">
    <property type="entry name" value="Gp_dh_N"/>
    <property type="match status" value="1"/>
</dbReference>
<dbReference type="PIRSF" id="PIRSF000149">
    <property type="entry name" value="GAP_DH"/>
    <property type="match status" value="1"/>
</dbReference>
<dbReference type="PRINTS" id="PR00078">
    <property type="entry name" value="G3PDHDRGNASE"/>
</dbReference>
<dbReference type="SMART" id="SM00846">
    <property type="entry name" value="Gp_dh_N"/>
    <property type="match status" value="1"/>
</dbReference>
<dbReference type="SUPFAM" id="SSF55347">
    <property type="entry name" value="Glyceraldehyde-3-phosphate dehydrogenase-like, C-terminal domain"/>
    <property type="match status" value="1"/>
</dbReference>
<dbReference type="SUPFAM" id="SSF51735">
    <property type="entry name" value="NAD(P)-binding Rossmann-fold domains"/>
    <property type="match status" value="1"/>
</dbReference>
<proteinExistence type="evidence at protein level"/>